<evidence type="ECO:0000255" key="1">
    <source>
        <dbReference type="HAMAP-Rule" id="MF_00251"/>
    </source>
</evidence>
<evidence type="ECO:0000305" key="2"/>
<keyword id="KW-0687">Ribonucleoprotein</keyword>
<keyword id="KW-0689">Ribosomal protein</keyword>
<reference key="1">
    <citation type="submission" date="2009-01" db="EMBL/GenBank/DDBJ databases">
        <title>Complete sequence of Chloroflexus sp. Y-400-fl.</title>
        <authorList>
            <consortium name="US DOE Joint Genome Institute"/>
            <person name="Lucas S."/>
            <person name="Copeland A."/>
            <person name="Lapidus A."/>
            <person name="Glavina del Rio T."/>
            <person name="Dalin E."/>
            <person name="Tice H."/>
            <person name="Bruce D."/>
            <person name="Goodwin L."/>
            <person name="Pitluck S."/>
            <person name="Sims D."/>
            <person name="Kiss H."/>
            <person name="Brettin T."/>
            <person name="Detter J.C."/>
            <person name="Han C."/>
            <person name="Larimer F."/>
            <person name="Land M."/>
            <person name="Hauser L."/>
            <person name="Kyrpides N."/>
            <person name="Ovchinnikova G."/>
            <person name="Bryant D.A."/>
            <person name="Richardson P."/>
        </authorList>
    </citation>
    <scope>NUCLEOTIDE SEQUENCE [LARGE SCALE GENOMIC DNA]</scope>
    <source>
        <strain>ATCC 29364 / DSM 637 / Y-400-fl</strain>
    </source>
</reference>
<name>RL36_CHLSY</name>
<protein>
    <recommendedName>
        <fullName evidence="1">Large ribosomal subunit protein bL36</fullName>
    </recommendedName>
    <alternativeName>
        <fullName evidence="2">50S ribosomal protein L36</fullName>
    </alternativeName>
</protein>
<proteinExistence type="inferred from homology"/>
<organism>
    <name type="scientific">Chloroflexus aurantiacus (strain ATCC 29364 / DSM 637 / Y-400-fl)</name>
    <dbReference type="NCBI Taxonomy" id="480224"/>
    <lineage>
        <taxon>Bacteria</taxon>
        <taxon>Bacillati</taxon>
        <taxon>Chloroflexota</taxon>
        <taxon>Chloroflexia</taxon>
        <taxon>Chloroflexales</taxon>
        <taxon>Chloroflexineae</taxon>
        <taxon>Chloroflexaceae</taxon>
        <taxon>Chloroflexus</taxon>
    </lineage>
</organism>
<feature type="chain" id="PRO_1000196177" description="Large ribosomal subunit protein bL36">
    <location>
        <begin position="1"/>
        <end position="38"/>
    </location>
</feature>
<dbReference type="EMBL" id="CP001364">
    <property type="protein sequence ID" value="ACM53971.1"/>
    <property type="molecule type" value="Genomic_DNA"/>
</dbReference>
<dbReference type="SMR" id="B9LJF5"/>
<dbReference type="KEGG" id="chl:Chy400_2579"/>
<dbReference type="HOGENOM" id="CLU_135723_6_2_0"/>
<dbReference type="OrthoDB" id="9802520at2"/>
<dbReference type="GO" id="GO:0005737">
    <property type="term" value="C:cytoplasm"/>
    <property type="evidence" value="ECO:0007669"/>
    <property type="project" value="UniProtKB-ARBA"/>
</dbReference>
<dbReference type="GO" id="GO:1990904">
    <property type="term" value="C:ribonucleoprotein complex"/>
    <property type="evidence" value="ECO:0007669"/>
    <property type="project" value="UniProtKB-KW"/>
</dbReference>
<dbReference type="GO" id="GO:0005840">
    <property type="term" value="C:ribosome"/>
    <property type="evidence" value="ECO:0007669"/>
    <property type="project" value="UniProtKB-KW"/>
</dbReference>
<dbReference type="GO" id="GO:0003735">
    <property type="term" value="F:structural constituent of ribosome"/>
    <property type="evidence" value="ECO:0007669"/>
    <property type="project" value="InterPro"/>
</dbReference>
<dbReference type="GO" id="GO:0006412">
    <property type="term" value="P:translation"/>
    <property type="evidence" value="ECO:0007669"/>
    <property type="project" value="UniProtKB-UniRule"/>
</dbReference>
<dbReference type="HAMAP" id="MF_00251">
    <property type="entry name" value="Ribosomal_bL36"/>
    <property type="match status" value="1"/>
</dbReference>
<dbReference type="InterPro" id="IPR000473">
    <property type="entry name" value="Ribosomal_bL36"/>
</dbReference>
<dbReference type="InterPro" id="IPR035977">
    <property type="entry name" value="Ribosomal_bL36_sp"/>
</dbReference>
<dbReference type="NCBIfam" id="TIGR01022">
    <property type="entry name" value="rpmJ_bact"/>
    <property type="match status" value="1"/>
</dbReference>
<dbReference type="PANTHER" id="PTHR42888">
    <property type="entry name" value="50S RIBOSOMAL PROTEIN L36, CHLOROPLASTIC"/>
    <property type="match status" value="1"/>
</dbReference>
<dbReference type="PANTHER" id="PTHR42888:SF1">
    <property type="entry name" value="LARGE RIBOSOMAL SUBUNIT PROTEIN BL36C"/>
    <property type="match status" value="1"/>
</dbReference>
<dbReference type="Pfam" id="PF00444">
    <property type="entry name" value="Ribosomal_L36"/>
    <property type="match status" value="1"/>
</dbReference>
<dbReference type="SUPFAM" id="SSF57840">
    <property type="entry name" value="Ribosomal protein L36"/>
    <property type="match status" value="1"/>
</dbReference>
<dbReference type="PROSITE" id="PS00828">
    <property type="entry name" value="RIBOSOMAL_L36"/>
    <property type="match status" value="1"/>
</dbReference>
<sequence length="38" mass="4468">MKVRASVKPRCEYCKVIKRKGVIRVICSRTPKHKQRQG</sequence>
<comment type="similarity">
    <text evidence="1">Belongs to the bacterial ribosomal protein bL36 family.</text>
</comment>
<gene>
    <name evidence="1" type="primary">rpmJ</name>
    <name type="ordered locus">Chy400_2579</name>
</gene>
<accession>B9LJF5</accession>